<protein>
    <recommendedName>
        <fullName evidence="1">Argininosuccinate synthase</fullName>
        <ecNumber evidence="1">6.3.4.5</ecNumber>
    </recommendedName>
    <alternativeName>
        <fullName evidence="1">Citrulline--aspartate ligase</fullName>
    </alternativeName>
</protein>
<feature type="chain" id="PRO_1000129755" description="Argininosuccinate synthase">
    <location>
        <begin position="1"/>
        <end position="447"/>
    </location>
</feature>
<feature type="binding site" evidence="1">
    <location>
        <begin position="17"/>
        <end position="25"/>
    </location>
    <ligand>
        <name>ATP</name>
        <dbReference type="ChEBI" id="CHEBI:30616"/>
    </ligand>
</feature>
<feature type="binding site" evidence="1">
    <location>
        <position position="43"/>
    </location>
    <ligand>
        <name>ATP</name>
        <dbReference type="ChEBI" id="CHEBI:30616"/>
    </ligand>
</feature>
<feature type="binding site" evidence="1">
    <location>
        <position position="99"/>
    </location>
    <ligand>
        <name>L-citrulline</name>
        <dbReference type="ChEBI" id="CHEBI:57743"/>
    </ligand>
</feature>
<feature type="binding site" evidence="1">
    <location>
        <position position="129"/>
    </location>
    <ligand>
        <name>ATP</name>
        <dbReference type="ChEBI" id="CHEBI:30616"/>
    </ligand>
</feature>
<feature type="binding site" evidence="1">
    <location>
        <position position="131"/>
    </location>
    <ligand>
        <name>ATP</name>
        <dbReference type="ChEBI" id="CHEBI:30616"/>
    </ligand>
</feature>
<feature type="binding site" evidence="1">
    <location>
        <position position="131"/>
    </location>
    <ligand>
        <name>L-aspartate</name>
        <dbReference type="ChEBI" id="CHEBI:29991"/>
    </ligand>
</feature>
<feature type="binding site" evidence="1">
    <location>
        <position position="135"/>
    </location>
    <ligand>
        <name>L-aspartate</name>
        <dbReference type="ChEBI" id="CHEBI:29991"/>
    </ligand>
</feature>
<feature type="binding site" evidence="1">
    <location>
        <position position="135"/>
    </location>
    <ligand>
        <name>L-citrulline</name>
        <dbReference type="ChEBI" id="CHEBI:57743"/>
    </ligand>
</feature>
<feature type="binding site" evidence="1">
    <location>
        <position position="136"/>
    </location>
    <ligand>
        <name>ATP</name>
        <dbReference type="ChEBI" id="CHEBI:30616"/>
    </ligand>
</feature>
<feature type="binding site" evidence="1">
    <location>
        <position position="136"/>
    </location>
    <ligand>
        <name>L-aspartate</name>
        <dbReference type="ChEBI" id="CHEBI:29991"/>
    </ligand>
</feature>
<feature type="binding site" evidence="1">
    <location>
        <position position="139"/>
    </location>
    <ligand>
        <name>L-citrulline</name>
        <dbReference type="ChEBI" id="CHEBI:57743"/>
    </ligand>
</feature>
<feature type="binding site" evidence="1">
    <location>
        <position position="192"/>
    </location>
    <ligand>
        <name>L-citrulline</name>
        <dbReference type="ChEBI" id="CHEBI:57743"/>
    </ligand>
</feature>
<feature type="binding site" evidence="1">
    <location>
        <position position="194"/>
    </location>
    <ligand>
        <name>ATP</name>
        <dbReference type="ChEBI" id="CHEBI:30616"/>
    </ligand>
</feature>
<feature type="binding site" evidence="1">
    <location>
        <position position="201"/>
    </location>
    <ligand>
        <name>L-citrulline</name>
        <dbReference type="ChEBI" id="CHEBI:57743"/>
    </ligand>
</feature>
<feature type="binding site" evidence="1">
    <location>
        <position position="203"/>
    </location>
    <ligand>
        <name>L-citrulline</name>
        <dbReference type="ChEBI" id="CHEBI:57743"/>
    </ligand>
</feature>
<feature type="binding site" evidence="1">
    <location>
        <position position="280"/>
    </location>
    <ligand>
        <name>L-citrulline</name>
        <dbReference type="ChEBI" id="CHEBI:57743"/>
    </ligand>
</feature>
<evidence type="ECO:0000255" key="1">
    <source>
        <dbReference type="HAMAP-Rule" id="MF_00581"/>
    </source>
</evidence>
<reference key="1">
    <citation type="journal article" date="2007" name="PLoS Genet.">
        <title>Genome analysis of Minibacterium massiliensis highlights the convergent evolution of water-living bacteria.</title>
        <authorList>
            <person name="Audic S."/>
            <person name="Robert C."/>
            <person name="Campagna B."/>
            <person name="Parinello H."/>
            <person name="Claverie J.-M."/>
            <person name="Raoult D."/>
            <person name="Drancourt M."/>
        </authorList>
    </citation>
    <scope>NUCLEOTIDE SEQUENCE [LARGE SCALE GENOMIC DNA]</scope>
    <source>
        <strain>Marseille</strain>
    </source>
</reference>
<proteinExistence type="inferred from homology"/>
<organism>
    <name type="scientific">Janthinobacterium sp. (strain Marseille)</name>
    <name type="common">Minibacterium massiliensis</name>
    <dbReference type="NCBI Taxonomy" id="375286"/>
    <lineage>
        <taxon>Bacteria</taxon>
        <taxon>Pseudomonadati</taxon>
        <taxon>Pseudomonadota</taxon>
        <taxon>Betaproteobacteria</taxon>
        <taxon>Burkholderiales</taxon>
        <taxon>Oxalobacteraceae</taxon>
        <taxon>Janthinobacterium</taxon>
    </lineage>
</organism>
<name>ASSY_JANMA</name>
<keyword id="KW-0028">Amino-acid biosynthesis</keyword>
<keyword id="KW-0055">Arginine biosynthesis</keyword>
<keyword id="KW-0067">ATP-binding</keyword>
<keyword id="KW-0963">Cytoplasm</keyword>
<keyword id="KW-0436">Ligase</keyword>
<keyword id="KW-0547">Nucleotide-binding</keyword>
<sequence>MSNILQSVPVNQKVGIAFSGGLDTSAALHWMRQKGAIPYAYTANLGQPDETDYNAIPEKAKAYGAELARLIDCREQLVAEGIAALQSGAFHISTAGVTYFNTTPLGRAVTGTMLVAAMKEDNVDIWGDGSTFKGNDIERFYRYGLLMNPALRIYKPWLDDTFIQELGGRKEMSEFLIKSGFDYKMSVEKAYSTDSNILGATHEAKDLEELSSGMKIVQPIMGVAFWRDDVEVKREEVTVRFEEGRPVALNGVVYSDLVELMLEANRIGGRHGLGMSDQIENRIIEAKSRGIYEAPGLALLFIAYERLVTGIHNEDTIEQYRESGRRLGRLLYQGRWFDPQAIMLREAAQRWVARAITGEVTIELRRGNDYSILNTVSANLTYAPERLSMEKVEDAPFSPADRIGQLTMRNLDITDTRQKLGIYNDVGLLTGNTSVALPRIGKDSDKK</sequence>
<gene>
    <name evidence="1" type="primary">argG</name>
    <name type="ordered locus">mma_0847</name>
</gene>
<comment type="catalytic activity">
    <reaction evidence="1">
        <text>L-citrulline + L-aspartate + ATP = 2-(N(omega)-L-arginino)succinate + AMP + diphosphate + H(+)</text>
        <dbReference type="Rhea" id="RHEA:10932"/>
        <dbReference type="ChEBI" id="CHEBI:15378"/>
        <dbReference type="ChEBI" id="CHEBI:29991"/>
        <dbReference type="ChEBI" id="CHEBI:30616"/>
        <dbReference type="ChEBI" id="CHEBI:33019"/>
        <dbReference type="ChEBI" id="CHEBI:57472"/>
        <dbReference type="ChEBI" id="CHEBI:57743"/>
        <dbReference type="ChEBI" id="CHEBI:456215"/>
        <dbReference type="EC" id="6.3.4.5"/>
    </reaction>
</comment>
<comment type="pathway">
    <text evidence="1">Amino-acid biosynthesis; L-arginine biosynthesis; L-arginine from L-ornithine and carbamoyl phosphate: step 2/3.</text>
</comment>
<comment type="subunit">
    <text evidence="1">Homotetramer.</text>
</comment>
<comment type="subcellular location">
    <subcellularLocation>
        <location evidence="1">Cytoplasm</location>
    </subcellularLocation>
</comment>
<comment type="similarity">
    <text evidence="1">Belongs to the argininosuccinate synthase family. Type 2 subfamily.</text>
</comment>
<dbReference type="EC" id="6.3.4.5" evidence="1"/>
<dbReference type="EMBL" id="CP000269">
    <property type="protein sequence ID" value="ABR88363.1"/>
    <property type="molecule type" value="Genomic_DNA"/>
</dbReference>
<dbReference type="RefSeq" id="WP_012078711.1">
    <property type="nucleotide sequence ID" value="NC_009659.1"/>
</dbReference>
<dbReference type="SMR" id="A6SW90"/>
<dbReference type="STRING" id="375286.mma_0847"/>
<dbReference type="KEGG" id="mms:mma_0847"/>
<dbReference type="eggNOG" id="COG0137">
    <property type="taxonomic scope" value="Bacteria"/>
</dbReference>
<dbReference type="HOGENOM" id="CLU_032784_4_1_4"/>
<dbReference type="OrthoDB" id="9801641at2"/>
<dbReference type="UniPathway" id="UPA00068">
    <property type="reaction ID" value="UER00113"/>
</dbReference>
<dbReference type="Proteomes" id="UP000006388">
    <property type="component" value="Chromosome"/>
</dbReference>
<dbReference type="GO" id="GO:0005737">
    <property type="term" value="C:cytoplasm"/>
    <property type="evidence" value="ECO:0007669"/>
    <property type="project" value="UniProtKB-SubCell"/>
</dbReference>
<dbReference type="GO" id="GO:0004055">
    <property type="term" value="F:argininosuccinate synthase activity"/>
    <property type="evidence" value="ECO:0007669"/>
    <property type="project" value="UniProtKB-UniRule"/>
</dbReference>
<dbReference type="GO" id="GO:0005524">
    <property type="term" value="F:ATP binding"/>
    <property type="evidence" value="ECO:0007669"/>
    <property type="project" value="UniProtKB-UniRule"/>
</dbReference>
<dbReference type="GO" id="GO:0042803">
    <property type="term" value="F:protein homodimerization activity"/>
    <property type="evidence" value="ECO:0007669"/>
    <property type="project" value="InterPro"/>
</dbReference>
<dbReference type="GO" id="GO:0000053">
    <property type="term" value="P:argininosuccinate metabolic process"/>
    <property type="evidence" value="ECO:0007669"/>
    <property type="project" value="TreeGrafter"/>
</dbReference>
<dbReference type="GO" id="GO:0006526">
    <property type="term" value="P:L-arginine biosynthetic process"/>
    <property type="evidence" value="ECO:0007669"/>
    <property type="project" value="UniProtKB-UniRule"/>
</dbReference>
<dbReference type="GO" id="GO:0000050">
    <property type="term" value="P:urea cycle"/>
    <property type="evidence" value="ECO:0007669"/>
    <property type="project" value="TreeGrafter"/>
</dbReference>
<dbReference type="CDD" id="cd01999">
    <property type="entry name" value="ASS"/>
    <property type="match status" value="1"/>
</dbReference>
<dbReference type="Gene3D" id="1.10.287.400">
    <property type="match status" value="1"/>
</dbReference>
<dbReference type="Gene3D" id="3.90.1260.10">
    <property type="entry name" value="Argininosuccinate synthetase, chain A, domain 2"/>
    <property type="match status" value="1"/>
</dbReference>
<dbReference type="Gene3D" id="3.40.50.620">
    <property type="entry name" value="HUPs"/>
    <property type="match status" value="1"/>
</dbReference>
<dbReference type="HAMAP" id="MF_00581">
    <property type="entry name" value="Arg_succ_synth_type2"/>
    <property type="match status" value="1"/>
</dbReference>
<dbReference type="InterPro" id="IPR023437">
    <property type="entry name" value="Arg_succ_synth_type2_subfam"/>
</dbReference>
<dbReference type="InterPro" id="IPR048268">
    <property type="entry name" value="Arginosuc_syn_C"/>
</dbReference>
<dbReference type="InterPro" id="IPR048267">
    <property type="entry name" value="Arginosuc_syn_N"/>
</dbReference>
<dbReference type="InterPro" id="IPR001518">
    <property type="entry name" value="Arginosuc_synth"/>
</dbReference>
<dbReference type="InterPro" id="IPR018223">
    <property type="entry name" value="Arginosuc_synth_CS"/>
</dbReference>
<dbReference type="InterPro" id="IPR023434">
    <property type="entry name" value="Arginosuc_synth_type_1_subfam"/>
</dbReference>
<dbReference type="InterPro" id="IPR024074">
    <property type="entry name" value="AS_cat/multimer_dom_body"/>
</dbReference>
<dbReference type="InterPro" id="IPR024073">
    <property type="entry name" value="AS_multimer_C_tail"/>
</dbReference>
<dbReference type="InterPro" id="IPR014729">
    <property type="entry name" value="Rossmann-like_a/b/a_fold"/>
</dbReference>
<dbReference type="NCBIfam" id="TIGR00032">
    <property type="entry name" value="argG"/>
    <property type="match status" value="1"/>
</dbReference>
<dbReference type="NCBIfam" id="NF003779">
    <property type="entry name" value="PRK05370.1"/>
    <property type="match status" value="1"/>
</dbReference>
<dbReference type="PANTHER" id="PTHR11587">
    <property type="entry name" value="ARGININOSUCCINATE SYNTHASE"/>
    <property type="match status" value="1"/>
</dbReference>
<dbReference type="PANTHER" id="PTHR11587:SF2">
    <property type="entry name" value="ARGININOSUCCINATE SYNTHASE"/>
    <property type="match status" value="1"/>
</dbReference>
<dbReference type="Pfam" id="PF20979">
    <property type="entry name" value="Arginosuc_syn_C"/>
    <property type="match status" value="1"/>
</dbReference>
<dbReference type="Pfam" id="PF00764">
    <property type="entry name" value="Arginosuc_synth"/>
    <property type="match status" value="1"/>
</dbReference>
<dbReference type="SUPFAM" id="SSF52402">
    <property type="entry name" value="Adenine nucleotide alpha hydrolases-like"/>
    <property type="match status" value="1"/>
</dbReference>
<dbReference type="SUPFAM" id="SSF69864">
    <property type="entry name" value="Argininosuccinate synthetase, C-terminal domain"/>
    <property type="match status" value="1"/>
</dbReference>
<dbReference type="PROSITE" id="PS00564">
    <property type="entry name" value="ARGININOSUCCIN_SYN_1"/>
    <property type="match status" value="1"/>
</dbReference>
<dbReference type="PROSITE" id="PS00565">
    <property type="entry name" value="ARGININOSUCCIN_SYN_2"/>
    <property type="match status" value="1"/>
</dbReference>
<accession>A6SW90</accession>